<protein>
    <recommendedName>
        <fullName evidence="4">Valine--pyruvate aminotransferase</fullName>
        <ecNumber evidence="1">2.6.1.66</ecNumber>
    </recommendedName>
    <alternativeName>
        <fullName evidence="4">Alanine--valine transaminase</fullName>
    </alternativeName>
</protein>
<accession>P96847</accession>
<accession>F2GJR1</accession>
<accession>I6Y3W0</accession>
<name>AVTA_MYCTU</name>
<dbReference type="EC" id="2.6.1.66" evidence="1"/>
<dbReference type="EMBL" id="AL123456">
    <property type="protein sequence ID" value="CCP46387.1"/>
    <property type="molecule type" value="Genomic_DNA"/>
</dbReference>
<dbReference type="RefSeq" id="NP_218082.1">
    <property type="nucleotide sequence ID" value="NC_000962.3"/>
</dbReference>
<dbReference type="RefSeq" id="WP_003419356.1">
    <property type="nucleotide sequence ID" value="NZ_NVQJ01000014.1"/>
</dbReference>
<dbReference type="PDB" id="5YHV">
    <property type="method" value="X-ray"/>
    <property type="resolution" value="2.70 A"/>
    <property type="chains" value="A/B/C/D=1-388"/>
</dbReference>
<dbReference type="PDBsum" id="5YHV"/>
<dbReference type="SMR" id="P96847"/>
<dbReference type="STRING" id="83332.Rv3565"/>
<dbReference type="PaxDb" id="83332-Rv3565"/>
<dbReference type="DNASU" id="888305"/>
<dbReference type="GeneID" id="888305"/>
<dbReference type="KEGG" id="mtu:Rv3565"/>
<dbReference type="KEGG" id="mtv:RVBD_3565"/>
<dbReference type="PATRIC" id="fig|83332.111.peg.3970"/>
<dbReference type="TubercuList" id="Rv3565"/>
<dbReference type="eggNOG" id="COG0436">
    <property type="taxonomic scope" value="Bacteria"/>
</dbReference>
<dbReference type="InParanoid" id="P96847"/>
<dbReference type="OrthoDB" id="9763453at2"/>
<dbReference type="PhylomeDB" id="P96847"/>
<dbReference type="BRENDA" id="2.6.1.1">
    <property type="organism ID" value="3445"/>
</dbReference>
<dbReference type="Proteomes" id="UP000001584">
    <property type="component" value="Chromosome"/>
</dbReference>
<dbReference type="GO" id="GO:0009274">
    <property type="term" value="C:peptidoglycan-based cell wall"/>
    <property type="evidence" value="ECO:0007005"/>
    <property type="project" value="MTBBASE"/>
</dbReference>
<dbReference type="GO" id="GO:0030170">
    <property type="term" value="F:pyridoxal phosphate binding"/>
    <property type="evidence" value="ECO:0007669"/>
    <property type="project" value="InterPro"/>
</dbReference>
<dbReference type="GO" id="GO:0009042">
    <property type="term" value="F:valine-pyruvate transaminase activity"/>
    <property type="evidence" value="ECO:0007669"/>
    <property type="project" value="UniProtKB-EC"/>
</dbReference>
<dbReference type="GO" id="GO:0006520">
    <property type="term" value="P:amino acid metabolic process"/>
    <property type="evidence" value="ECO:0007669"/>
    <property type="project" value="InterPro"/>
</dbReference>
<dbReference type="GO" id="GO:0009058">
    <property type="term" value="P:biosynthetic process"/>
    <property type="evidence" value="ECO:0007669"/>
    <property type="project" value="InterPro"/>
</dbReference>
<dbReference type="CDD" id="cd00609">
    <property type="entry name" value="AAT_like"/>
    <property type="match status" value="1"/>
</dbReference>
<dbReference type="FunFam" id="3.40.640.10:FF:000179">
    <property type="entry name" value="Aminotransferase"/>
    <property type="match status" value="1"/>
</dbReference>
<dbReference type="Gene3D" id="3.40.640.10">
    <property type="entry name" value="Type I PLP-dependent aspartate aminotransferase-like (Major domain)"/>
    <property type="match status" value="1"/>
</dbReference>
<dbReference type="InterPro" id="IPR004839">
    <property type="entry name" value="Aminotransferase_I/II_large"/>
</dbReference>
<dbReference type="InterPro" id="IPR050596">
    <property type="entry name" value="AspAT/PAT-like"/>
</dbReference>
<dbReference type="InterPro" id="IPR004838">
    <property type="entry name" value="NHTrfase_class1_PyrdxlP-BS"/>
</dbReference>
<dbReference type="InterPro" id="IPR015424">
    <property type="entry name" value="PyrdxlP-dep_Trfase"/>
</dbReference>
<dbReference type="InterPro" id="IPR015421">
    <property type="entry name" value="PyrdxlP-dep_Trfase_major"/>
</dbReference>
<dbReference type="PANTHER" id="PTHR46383:SF2">
    <property type="entry name" value="AMINOTRANSFERASE"/>
    <property type="match status" value="1"/>
</dbReference>
<dbReference type="PANTHER" id="PTHR46383">
    <property type="entry name" value="ASPARTATE AMINOTRANSFERASE"/>
    <property type="match status" value="1"/>
</dbReference>
<dbReference type="Pfam" id="PF00155">
    <property type="entry name" value="Aminotran_1_2"/>
    <property type="match status" value="1"/>
</dbReference>
<dbReference type="SUPFAM" id="SSF53383">
    <property type="entry name" value="PLP-dependent transferases"/>
    <property type="match status" value="1"/>
</dbReference>
<dbReference type="PROSITE" id="PS00105">
    <property type="entry name" value="AA_TRANSFER_CLASS_1"/>
    <property type="match status" value="1"/>
</dbReference>
<comment type="catalytic activity">
    <reaction evidence="1">
        <text>L-valine + pyruvate = 3-methyl-2-oxobutanoate + L-alanine</text>
        <dbReference type="Rhea" id="RHEA:22912"/>
        <dbReference type="ChEBI" id="CHEBI:11851"/>
        <dbReference type="ChEBI" id="CHEBI:15361"/>
        <dbReference type="ChEBI" id="CHEBI:57762"/>
        <dbReference type="ChEBI" id="CHEBI:57972"/>
        <dbReference type="EC" id="2.6.1.66"/>
    </reaction>
</comment>
<comment type="cofactor">
    <cofactor evidence="2">
        <name>pyridoxal 5'-phosphate</name>
        <dbReference type="ChEBI" id="CHEBI:597326"/>
    </cofactor>
</comment>
<comment type="similarity">
    <text evidence="4">Belongs to the class-I pyridoxal-phosphate-dependent aminotransferase family.</text>
</comment>
<gene>
    <name evidence="3" type="primary">aspB</name>
    <name evidence="5" type="ordered locus">Rv3565</name>
</gene>
<organism>
    <name type="scientific">Mycobacterium tuberculosis (strain ATCC 25618 / H37Rv)</name>
    <dbReference type="NCBI Taxonomy" id="83332"/>
    <lineage>
        <taxon>Bacteria</taxon>
        <taxon>Bacillati</taxon>
        <taxon>Actinomycetota</taxon>
        <taxon>Actinomycetes</taxon>
        <taxon>Mycobacteriales</taxon>
        <taxon>Mycobacteriaceae</taxon>
        <taxon>Mycobacterium</taxon>
        <taxon>Mycobacterium tuberculosis complex</taxon>
    </lineage>
</organism>
<evidence type="ECO:0000269" key="1">
    <source>
    </source>
</evidence>
<evidence type="ECO:0000269" key="2">
    <source ref="5"/>
</evidence>
<evidence type="ECO:0000303" key="3">
    <source>
    </source>
</evidence>
<evidence type="ECO:0000305" key="4"/>
<evidence type="ECO:0000312" key="5">
    <source>
        <dbReference type="EMBL" id="CCP46387.1"/>
    </source>
</evidence>
<evidence type="ECO:0007744" key="6">
    <source>
        <dbReference type="PDB" id="5YHV"/>
    </source>
</evidence>
<evidence type="ECO:0007829" key="7">
    <source>
        <dbReference type="PDB" id="5YHV"/>
    </source>
</evidence>
<reference key="1">
    <citation type="journal article" date="1998" name="Nature">
        <title>Deciphering the biology of Mycobacterium tuberculosis from the complete genome sequence.</title>
        <authorList>
            <person name="Cole S.T."/>
            <person name="Brosch R."/>
            <person name="Parkhill J."/>
            <person name="Garnier T."/>
            <person name="Churcher C.M."/>
            <person name="Harris D.E."/>
            <person name="Gordon S.V."/>
            <person name="Eiglmeier K."/>
            <person name="Gas S."/>
            <person name="Barry C.E. III"/>
            <person name="Tekaia F."/>
            <person name="Badcock K."/>
            <person name="Basham D."/>
            <person name="Brown D."/>
            <person name="Chillingworth T."/>
            <person name="Connor R."/>
            <person name="Davies R.M."/>
            <person name="Devlin K."/>
            <person name="Feltwell T."/>
            <person name="Gentles S."/>
            <person name="Hamlin N."/>
            <person name="Holroyd S."/>
            <person name="Hornsby T."/>
            <person name="Jagels K."/>
            <person name="Krogh A."/>
            <person name="McLean J."/>
            <person name="Moule S."/>
            <person name="Murphy L.D."/>
            <person name="Oliver S."/>
            <person name="Osborne J."/>
            <person name="Quail M.A."/>
            <person name="Rajandream M.A."/>
            <person name="Rogers J."/>
            <person name="Rutter S."/>
            <person name="Seeger K."/>
            <person name="Skelton S."/>
            <person name="Squares S."/>
            <person name="Squares R."/>
            <person name="Sulston J.E."/>
            <person name="Taylor K."/>
            <person name="Whitehead S."/>
            <person name="Barrell B.G."/>
        </authorList>
    </citation>
    <scope>NUCLEOTIDE SEQUENCE [LARGE SCALE GENOMIC DNA]</scope>
    <source>
        <strain>ATCC 25618 / H37Rv</strain>
    </source>
</reference>
<reference key="2">
    <citation type="journal article" date="2011" name="Mol. Cell. Proteomics">
        <title>Proteogenomic analysis of Mycobacterium tuberculosis by high resolution mass spectrometry.</title>
        <authorList>
            <person name="Kelkar D.S."/>
            <person name="Kumar D."/>
            <person name="Kumar P."/>
            <person name="Balakrishnan L."/>
            <person name="Muthusamy B."/>
            <person name="Yadav A.K."/>
            <person name="Shrivastava P."/>
            <person name="Marimuthu A."/>
            <person name="Anand S."/>
            <person name="Sundaram H."/>
            <person name="Kingsbury R."/>
            <person name="Harsha H.C."/>
            <person name="Nair B."/>
            <person name="Prasad T.S."/>
            <person name="Chauhan D.S."/>
            <person name="Katoch K."/>
            <person name="Katoch V.M."/>
            <person name="Kumar P."/>
            <person name="Chaerkady R."/>
            <person name="Ramachandran S."/>
            <person name="Dash D."/>
            <person name="Pandey A."/>
        </authorList>
    </citation>
    <scope>IDENTIFICATION BY MASS SPECTROMETRY [LARGE SCALE ANALYSIS]</scope>
</reference>
<reference key="3">
    <citation type="journal article" date="2020" name="Nat. Commun.">
        <title>Aspartate aminotransferase Rv3722c governs aspartate-dependent nitrogen metabolism in Mycobacterium tuberculosis.</title>
        <authorList>
            <person name="Jansen R.S."/>
            <person name="Mandyoli L."/>
            <person name="Hughes R."/>
            <person name="Wakabayashi S."/>
            <person name="Pinkham J.T."/>
            <person name="Selbach B."/>
            <person name="Guinn K.M."/>
            <person name="Rubin E.J."/>
            <person name="Sacchettini J.C."/>
            <person name="Rhee K.Y."/>
        </authorList>
    </citation>
    <scope>CATALYTIC ACTIVITY</scope>
    <source>
        <strain>H37Rv</strain>
    </source>
</reference>
<reference key="4">
    <citation type="journal article" date="2014" name="Acta Crystallogr. F Struct. Biol. Commun.">
        <title>Overexpression, purification, crystallization and structure determination of AspB, a putative aspartate aminotransferase from Mycobacterium tuberculosis.</title>
        <authorList>
            <person name="Saroj D.C."/>
            <person name="Singh K.H."/>
            <person name="Anant A."/>
            <person name="Biswal B.K."/>
        </authorList>
    </citation>
    <scope>CRYSTALLIZATION</scope>
</reference>
<reference evidence="6" key="5">
    <citation type="submission" date="2017-09" db="PDB data bank">
        <title>Crystal structure of an aminotransferase from Mycobacterium tuberculosis.</title>
        <authorList>
            <person name="Saroj D.C."/>
            <person name="Biswal B.K."/>
        </authorList>
    </citation>
    <scope>X-RAY CRYSTALLOGRAPHY (2.70 ANGSTROMS) IN COMPLEX WITH PYRIDOXAL PHOSPHATE AND 2-OXOGLUTARIC ACID</scope>
    <scope>COFACTOR</scope>
</reference>
<feature type="chain" id="PRO_0000450668" description="Valine--pyruvate aminotransferase">
    <location>
        <begin position="1"/>
        <end position="388"/>
    </location>
</feature>
<feature type="modified residue" description="N6-(pyridoxal phosphate)lysine" evidence="2">
    <location>
        <position position="234"/>
    </location>
</feature>
<feature type="turn" evidence="7">
    <location>
        <begin position="7"/>
        <end position="9"/>
    </location>
</feature>
<feature type="helix" evidence="7">
    <location>
        <begin position="15"/>
        <end position="29"/>
    </location>
</feature>
<feature type="helix" evidence="7">
    <location>
        <begin position="47"/>
        <end position="59"/>
    </location>
</feature>
<feature type="helix" evidence="7">
    <location>
        <begin position="71"/>
        <end position="85"/>
    </location>
</feature>
<feature type="helix" evidence="7">
    <location>
        <begin position="91"/>
        <end position="93"/>
    </location>
</feature>
<feature type="strand" evidence="7">
    <location>
        <begin position="94"/>
        <end position="98"/>
    </location>
</feature>
<feature type="helix" evidence="7">
    <location>
        <begin position="99"/>
        <end position="111"/>
    </location>
</feature>
<feature type="strand" evidence="7">
    <location>
        <begin position="117"/>
        <end position="123"/>
    </location>
</feature>
<feature type="helix" evidence="7">
    <location>
        <begin position="126"/>
        <end position="134"/>
    </location>
</feature>
<feature type="strand" evidence="7">
    <location>
        <begin position="138"/>
        <end position="143"/>
    </location>
</feature>
<feature type="helix" evidence="7">
    <location>
        <begin position="146"/>
        <end position="148"/>
    </location>
</feature>
<feature type="helix" evidence="7">
    <location>
        <begin position="154"/>
        <end position="158"/>
    </location>
</feature>
<feature type="strand" evidence="7">
    <location>
        <begin position="165"/>
        <end position="172"/>
    </location>
</feature>
<feature type="turn" evidence="7">
    <location>
        <begin position="174"/>
        <end position="176"/>
    </location>
</feature>
<feature type="helix" evidence="7">
    <location>
        <begin position="182"/>
        <end position="195"/>
    </location>
</feature>
<feature type="strand" evidence="7">
    <location>
        <begin position="198"/>
        <end position="202"/>
    </location>
</feature>
<feature type="turn" evidence="7">
    <location>
        <begin position="204"/>
        <end position="207"/>
    </location>
</feature>
<feature type="helix" evidence="7">
    <location>
        <begin position="219"/>
        <end position="221"/>
    </location>
</feature>
<feature type="strand" evidence="7">
    <location>
        <begin position="224"/>
        <end position="236"/>
    </location>
</feature>
<feature type="helix" evidence="7">
    <location>
        <begin position="239"/>
        <end position="241"/>
    </location>
</feature>
<feature type="strand" evidence="7">
    <location>
        <begin position="244"/>
        <end position="247"/>
    </location>
</feature>
<feature type="helix" evidence="7">
    <location>
        <begin position="250"/>
        <end position="252"/>
    </location>
</feature>
<feature type="helix" evidence="7">
    <location>
        <begin position="253"/>
        <end position="263"/>
    </location>
</feature>
<feature type="strand" evidence="7">
    <location>
        <begin position="265"/>
        <end position="267"/>
    </location>
</feature>
<feature type="helix" evidence="7">
    <location>
        <begin position="269"/>
        <end position="275"/>
    </location>
</feature>
<feature type="helix" evidence="7">
    <location>
        <begin position="276"/>
        <end position="279"/>
    </location>
</feature>
<feature type="helix" evidence="7">
    <location>
        <begin position="281"/>
        <end position="308"/>
    </location>
</feature>
<feature type="strand" evidence="7">
    <location>
        <begin position="321"/>
        <end position="325"/>
    </location>
</feature>
<feature type="turn" evidence="7">
    <location>
        <begin position="327"/>
        <end position="329"/>
    </location>
</feature>
<feature type="helix" evidence="7">
    <location>
        <begin position="333"/>
        <end position="343"/>
    </location>
</feature>
<feature type="helix" evidence="7">
    <location>
        <begin position="351"/>
        <end position="353"/>
    </location>
</feature>
<feature type="turn" evidence="7">
    <location>
        <begin position="356"/>
        <end position="358"/>
    </location>
</feature>
<feature type="helix" evidence="7">
    <location>
        <begin position="359"/>
        <end position="361"/>
    </location>
</feature>
<feature type="strand" evidence="7">
    <location>
        <begin position="362"/>
        <end position="366"/>
    </location>
</feature>
<feature type="helix" evidence="7">
    <location>
        <begin position="371"/>
        <end position="384"/>
    </location>
</feature>
<feature type="helix" evidence="7">
    <location>
        <begin position="385"/>
        <end position="387"/>
    </location>
</feature>
<proteinExistence type="evidence at protein level"/>
<sequence>MTDRVALRAGVPPFYVMDVWLAAAERQRTHGDLVNLSAGQPSAGAPEPVRAAAAAALHLNQLGYSVALGIPELRDAIAADYQRRHGITVEPDAVVITTGSSGGFLLAFLACFDAGDRVAMASPGYPCYRNILSALGCEVVEIPCGPQTRFQPTAQMLAEIDPPLRGVVVASPANPTGTVIPPEELAAIASWCDASDVRLISDEVYHGLVYQGAPQTSCAWQTSRNAVVVNSFSKYYAMTGWRLGWLLVPTVLRRAVDCLTGNFTICPPVLSQIAAVSAFTPEATAEADGNLASYAINRSLLLDGLRRIGIDRLAPTDGAFYVYADVSDFTSDSLAFCSKLLADTGVAIAPGIDFDTARGGSFVRISFAGPSGDIEEALRRIGSWLPSQ</sequence>
<keyword id="KW-0002">3D-structure</keyword>
<keyword id="KW-0032">Aminotransferase</keyword>
<keyword id="KW-0663">Pyridoxal phosphate</keyword>
<keyword id="KW-1185">Reference proteome</keyword>
<keyword id="KW-0808">Transferase</keyword>